<gene>
    <name evidence="1" type="primary">thrB</name>
    <name type="ordered locus">Pmob_1581</name>
</gene>
<dbReference type="EC" id="2.7.1.39" evidence="1"/>
<dbReference type="EMBL" id="CP000879">
    <property type="protein sequence ID" value="ABX32277.1"/>
    <property type="molecule type" value="Genomic_DNA"/>
</dbReference>
<dbReference type="RefSeq" id="WP_012209374.1">
    <property type="nucleotide sequence ID" value="NC_010003.1"/>
</dbReference>
<dbReference type="SMR" id="A9BGN7"/>
<dbReference type="STRING" id="403833.Pmob_1581"/>
<dbReference type="KEGG" id="pmo:Pmob_1581"/>
<dbReference type="eggNOG" id="COG0083">
    <property type="taxonomic scope" value="Bacteria"/>
</dbReference>
<dbReference type="HOGENOM" id="CLU_041243_0_2_0"/>
<dbReference type="OrthoDB" id="9769912at2"/>
<dbReference type="UniPathway" id="UPA00050">
    <property type="reaction ID" value="UER00064"/>
</dbReference>
<dbReference type="Proteomes" id="UP000000789">
    <property type="component" value="Chromosome"/>
</dbReference>
<dbReference type="GO" id="GO:0005737">
    <property type="term" value="C:cytoplasm"/>
    <property type="evidence" value="ECO:0007669"/>
    <property type="project" value="UniProtKB-SubCell"/>
</dbReference>
<dbReference type="GO" id="GO:0005524">
    <property type="term" value="F:ATP binding"/>
    <property type="evidence" value="ECO:0007669"/>
    <property type="project" value="UniProtKB-UniRule"/>
</dbReference>
<dbReference type="GO" id="GO:0004413">
    <property type="term" value="F:homoserine kinase activity"/>
    <property type="evidence" value="ECO:0007669"/>
    <property type="project" value="UniProtKB-UniRule"/>
</dbReference>
<dbReference type="GO" id="GO:0009088">
    <property type="term" value="P:threonine biosynthetic process"/>
    <property type="evidence" value="ECO:0007669"/>
    <property type="project" value="UniProtKB-UniRule"/>
</dbReference>
<dbReference type="Gene3D" id="3.30.230.10">
    <property type="match status" value="1"/>
</dbReference>
<dbReference type="Gene3D" id="3.30.70.890">
    <property type="entry name" value="GHMP kinase, C-terminal domain"/>
    <property type="match status" value="1"/>
</dbReference>
<dbReference type="HAMAP" id="MF_00384">
    <property type="entry name" value="Homoser_kinase"/>
    <property type="match status" value="1"/>
</dbReference>
<dbReference type="InterPro" id="IPR013750">
    <property type="entry name" value="GHMP_kinase_C_dom"/>
</dbReference>
<dbReference type="InterPro" id="IPR036554">
    <property type="entry name" value="GHMP_kinase_C_sf"/>
</dbReference>
<dbReference type="InterPro" id="IPR006204">
    <property type="entry name" value="GHMP_kinase_N_dom"/>
</dbReference>
<dbReference type="InterPro" id="IPR006203">
    <property type="entry name" value="GHMP_knse_ATP-bd_CS"/>
</dbReference>
<dbReference type="InterPro" id="IPR000870">
    <property type="entry name" value="Homoserine_kinase"/>
</dbReference>
<dbReference type="InterPro" id="IPR020568">
    <property type="entry name" value="Ribosomal_Su5_D2-typ_SF"/>
</dbReference>
<dbReference type="InterPro" id="IPR014721">
    <property type="entry name" value="Ribsml_uS5_D2-typ_fold_subgr"/>
</dbReference>
<dbReference type="NCBIfam" id="NF002288">
    <property type="entry name" value="PRK01212.1-4"/>
    <property type="match status" value="1"/>
</dbReference>
<dbReference type="NCBIfam" id="TIGR00191">
    <property type="entry name" value="thrB"/>
    <property type="match status" value="1"/>
</dbReference>
<dbReference type="PANTHER" id="PTHR20861:SF1">
    <property type="entry name" value="HOMOSERINE KINASE"/>
    <property type="match status" value="1"/>
</dbReference>
<dbReference type="PANTHER" id="PTHR20861">
    <property type="entry name" value="HOMOSERINE/4-DIPHOSPHOCYTIDYL-2-C-METHYL-D-ERYTHRITOL KINASE"/>
    <property type="match status" value="1"/>
</dbReference>
<dbReference type="Pfam" id="PF08544">
    <property type="entry name" value="GHMP_kinases_C"/>
    <property type="match status" value="1"/>
</dbReference>
<dbReference type="Pfam" id="PF00288">
    <property type="entry name" value="GHMP_kinases_N"/>
    <property type="match status" value="1"/>
</dbReference>
<dbReference type="PIRSF" id="PIRSF000676">
    <property type="entry name" value="Homoser_kin"/>
    <property type="match status" value="1"/>
</dbReference>
<dbReference type="PRINTS" id="PR00958">
    <property type="entry name" value="HOMSERKINASE"/>
</dbReference>
<dbReference type="SUPFAM" id="SSF55060">
    <property type="entry name" value="GHMP Kinase, C-terminal domain"/>
    <property type="match status" value="1"/>
</dbReference>
<dbReference type="SUPFAM" id="SSF54211">
    <property type="entry name" value="Ribosomal protein S5 domain 2-like"/>
    <property type="match status" value="1"/>
</dbReference>
<dbReference type="PROSITE" id="PS00627">
    <property type="entry name" value="GHMP_KINASES_ATP"/>
    <property type="match status" value="1"/>
</dbReference>
<keyword id="KW-0028">Amino-acid biosynthesis</keyword>
<keyword id="KW-0067">ATP-binding</keyword>
<keyword id="KW-0963">Cytoplasm</keyword>
<keyword id="KW-0418">Kinase</keyword>
<keyword id="KW-0547">Nucleotide-binding</keyword>
<keyword id="KW-0791">Threonine biosynthesis</keyword>
<keyword id="KW-0808">Transferase</keyword>
<protein>
    <recommendedName>
        <fullName evidence="1">Homoserine kinase</fullName>
        <shortName evidence="1">HK</shortName>
        <shortName evidence="1">HSK</shortName>
        <ecNumber evidence="1">2.7.1.39</ecNumber>
    </recommendedName>
</protein>
<name>KHSE_PETMO</name>
<sequence length="307" mass="33987">MIRVKVPATTANIGPGFDSLGIALQLYNIIEVEEINFGLEINIPVEDQAYIETNEHNLVYQAMKRLFDAVNIHPKGLRINLINNIPIARGLGSSAACIVGGLVVANELLNNPLKKEEIIYLAATMDGHTDNILPAFVGGLTVGSLLEKEVKYVKMDLPTQLKLLAIIPDFHFSTKKARSLLPKNVPIEDAVFNISRVGLLVASLVTSHFENLSEATKDKIHQPYRKDFIPYWEEITSKLMKIGTKGYFLSGSGPTIMGILDGDYKNIEDEMVNFLSHFDQGYKVTVLDVCHNGLEVINDEGSNGCYR</sequence>
<feature type="chain" id="PRO_1000080125" description="Homoserine kinase">
    <location>
        <begin position="1"/>
        <end position="307"/>
    </location>
</feature>
<feature type="binding site" evidence="1">
    <location>
        <begin position="86"/>
        <end position="96"/>
    </location>
    <ligand>
        <name>ATP</name>
        <dbReference type="ChEBI" id="CHEBI:30616"/>
    </ligand>
</feature>
<reference key="1">
    <citation type="submission" date="2007-11" db="EMBL/GenBank/DDBJ databases">
        <title>Complete sequence of Petroga mobilis SJ95.</title>
        <authorList>
            <consortium name="US DOE Joint Genome Institute"/>
            <person name="Copeland A."/>
            <person name="Lucas S."/>
            <person name="Lapidus A."/>
            <person name="Barry K."/>
            <person name="Glavina del Rio T."/>
            <person name="Dalin E."/>
            <person name="Tice H."/>
            <person name="Pitluck S."/>
            <person name="Meincke L."/>
            <person name="Brettin T."/>
            <person name="Bruce D."/>
            <person name="Detter J.C."/>
            <person name="Han C."/>
            <person name="Kuske C.R."/>
            <person name="Schmutz J."/>
            <person name="Larimer F."/>
            <person name="Land M."/>
            <person name="Hauser L."/>
            <person name="Kyrpides N."/>
            <person name="Mikhailova N."/>
            <person name="Noll K."/>
            <person name="Richardson P."/>
        </authorList>
    </citation>
    <scope>NUCLEOTIDE SEQUENCE [LARGE SCALE GENOMIC DNA]</scope>
    <source>
        <strain>DSM 10674 / SJ95</strain>
    </source>
</reference>
<proteinExistence type="inferred from homology"/>
<comment type="function">
    <text evidence="1">Catalyzes the ATP-dependent phosphorylation of L-homoserine to L-homoserine phosphate.</text>
</comment>
<comment type="catalytic activity">
    <reaction evidence="1">
        <text>L-homoserine + ATP = O-phospho-L-homoserine + ADP + H(+)</text>
        <dbReference type="Rhea" id="RHEA:13985"/>
        <dbReference type="ChEBI" id="CHEBI:15378"/>
        <dbReference type="ChEBI" id="CHEBI:30616"/>
        <dbReference type="ChEBI" id="CHEBI:57476"/>
        <dbReference type="ChEBI" id="CHEBI:57590"/>
        <dbReference type="ChEBI" id="CHEBI:456216"/>
        <dbReference type="EC" id="2.7.1.39"/>
    </reaction>
</comment>
<comment type="pathway">
    <text evidence="1">Amino-acid biosynthesis; L-threonine biosynthesis; L-threonine from L-aspartate: step 4/5.</text>
</comment>
<comment type="subcellular location">
    <subcellularLocation>
        <location evidence="1">Cytoplasm</location>
    </subcellularLocation>
</comment>
<comment type="similarity">
    <text evidence="1">Belongs to the GHMP kinase family. Homoserine kinase subfamily.</text>
</comment>
<organism>
    <name type="scientific">Petrotoga mobilis (strain DSM 10674 / SJ95)</name>
    <dbReference type="NCBI Taxonomy" id="403833"/>
    <lineage>
        <taxon>Bacteria</taxon>
        <taxon>Thermotogati</taxon>
        <taxon>Thermotogota</taxon>
        <taxon>Thermotogae</taxon>
        <taxon>Petrotogales</taxon>
        <taxon>Petrotogaceae</taxon>
        <taxon>Petrotoga</taxon>
    </lineage>
</organism>
<accession>A9BGN7</accession>
<evidence type="ECO:0000255" key="1">
    <source>
        <dbReference type="HAMAP-Rule" id="MF_00384"/>
    </source>
</evidence>